<reference key="1">
    <citation type="journal article" date="2001" name="Nature">
        <title>Genome sequence of Yersinia pestis, the causative agent of plague.</title>
        <authorList>
            <person name="Parkhill J."/>
            <person name="Wren B.W."/>
            <person name="Thomson N.R."/>
            <person name="Titball R.W."/>
            <person name="Holden M.T.G."/>
            <person name="Prentice M.B."/>
            <person name="Sebaihia M."/>
            <person name="James K.D."/>
            <person name="Churcher C.M."/>
            <person name="Mungall K.L."/>
            <person name="Baker S."/>
            <person name="Basham D."/>
            <person name="Bentley S.D."/>
            <person name="Brooks K."/>
            <person name="Cerdeno-Tarraga A.-M."/>
            <person name="Chillingworth T."/>
            <person name="Cronin A."/>
            <person name="Davies R.M."/>
            <person name="Davis P."/>
            <person name="Dougan G."/>
            <person name="Feltwell T."/>
            <person name="Hamlin N."/>
            <person name="Holroyd S."/>
            <person name="Jagels K."/>
            <person name="Karlyshev A.V."/>
            <person name="Leather S."/>
            <person name="Moule S."/>
            <person name="Oyston P.C.F."/>
            <person name="Quail M.A."/>
            <person name="Rutherford K.M."/>
            <person name="Simmonds M."/>
            <person name="Skelton J."/>
            <person name="Stevens K."/>
            <person name="Whitehead S."/>
            <person name="Barrell B.G."/>
        </authorList>
    </citation>
    <scope>NUCLEOTIDE SEQUENCE [LARGE SCALE GENOMIC DNA]</scope>
    <source>
        <strain>CO-92 / Biovar Orientalis</strain>
    </source>
</reference>
<reference key="2">
    <citation type="journal article" date="2002" name="J. Bacteriol.">
        <title>Genome sequence of Yersinia pestis KIM.</title>
        <authorList>
            <person name="Deng W."/>
            <person name="Burland V."/>
            <person name="Plunkett G. III"/>
            <person name="Boutin A."/>
            <person name="Mayhew G.F."/>
            <person name="Liss P."/>
            <person name="Perna N.T."/>
            <person name="Rose D.J."/>
            <person name="Mau B."/>
            <person name="Zhou S."/>
            <person name="Schwartz D.C."/>
            <person name="Fetherston J.D."/>
            <person name="Lindler L.E."/>
            <person name="Brubaker R.R."/>
            <person name="Plano G.V."/>
            <person name="Straley S.C."/>
            <person name="McDonough K.A."/>
            <person name="Nilles M.L."/>
            <person name="Matson J.S."/>
            <person name="Blattner F.R."/>
            <person name="Perry R.D."/>
        </authorList>
    </citation>
    <scope>NUCLEOTIDE SEQUENCE [LARGE SCALE GENOMIC DNA]</scope>
    <source>
        <strain>KIM10+ / Biovar Mediaevalis</strain>
    </source>
</reference>
<reference key="3">
    <citation type="journal article" date="2004" name="DNA Res.">
        <title>Complete genome sequence of Yersinia pestis strain 91001, an isolate avirulent to humans.</title>
        <authorList>
            <person name="Song Y."/>
            <person name="Tong Z."/>
            <person name="Wang J."/>
            <person name="Wang L."/>
            <person name="Guo Z."/>
            <person name="Han Y."/>
            <person name="Zhang J."/>
            <person name="Pei D."/>
            <person name="Zhou D."/>
            <person name="Qin H."/>
            <person name="Pang X."/>
            <person name="Han Y."/>
            <person name="Zhai J."/>
            <person name="Li M."/>
            <person name="Cui B."/>
            <person name="Qi Z."/>
            <person name="Jin L."/>
            <person name="Dai R."/>
            <person name="Chen F."/>
            <person name="Li S."/>
            <person name="Ye C."/>
            <person name="Du Z."/>
            <person name="Lin W."/>
            <person name="Wang J."/>
            <person name="Yu J."/>
            <person name="Yang H."/>
            <person name="Wang J."/>
            <person name="Huang P."/>
            <person name="Yang R."/>
        </authorList>
    </citation>
    <scope>NUCLEOTIDE SEQUENCE [LARGE SCALE GENOMIC DNA]</scope>
    <source>
        <strain>91001 / Biovar Mediaevalis</strain>
    </source>
</reference>
<gene>
    <name type="ordered locus">YPO0674</name>
    <name type="ordered locus">y3502/y3503</name>
    <name type="ordered locus">YP_2990</name>
</gene>
<comment type="cofactor">
    <cofactor evidence="4">
        <name>[4Fe-4S] cluster</name>
        <dbReference type="ChEBI" id="CHEBI:49883"/>
    </cofactor>
    <text evidence="4">Binds 1 [4Fe-4S] cluster. The cluster is coordinated with 3 cysteines and an exchangeable S-adenosyl-L-methionine.</text>
</comment>
<comment type="similarity">
    <text evidence="4">Belongs to the UPF0313 family.</text>
</comment>
<comment type="caution">
    <text evidence="4">Could be the product of a pseudogene.</text>
</comment>
<comment type="sequence caution" evidence="4">
    <conflict type="frameshift">
        <sequence resource="EMBL-CDS" id="AAM87050"/>
    </conflict>
</comment>
<comment type="sequence caution" evidence="4">
    <conflict type="frameshift">
        <sequence resource="EMBL-CDS" id="AAM87051"/>
    </conflict>
</comment>
<comment type="sequence caution" evidence="4">
    <conflict type="frameshift">
        <sequence resource="EMBL" id="AE017042"/>
    </conflict>
</comment>
<comment type="sequence caution" evidence="4">
    <conflict type="frameshift">
        <sequence resource="EMBL" id="AL590842"/>
    </conflict>
</comment>
<proteinExistence type="uncertain"/>
<keyword id="KW-0004">4Fe-4S</keyword>
<keyword id="KW-0408">Iron</keyword>
<keyword id="KW-0411">Iron-sulfur</keyword>
<keyword id="KW-0479">Metal-binding</keyword>
<keyword id="KW-1185">Reference proteome</keyword>
<keyword id="KW-0949">S-adenosyl-L-methionine</keyword>
<evidence type="ECO:0000255" key="1"/>
<evidence type="ECO:0000255" key="2">
    <source>
        <dbReference type="PROSITE-ProRule" id="PRU01266"/>
    </source>
</evidence>
<evidence type="ECO:0000256" key="3">
    <source>
        <dbReference type="SAM" id="MobiDB-lite"/>
    </source>
</evidence>
<evidence type="ECO:0000305" key="4"/>
<dbReference type="EMBL" id="AL590842">
    <property type="status" value="NOT_ANNOTATED_CDS"/>
    <property type="molecule type" value="Genomic_DNA"/>
</dbReference>
<dbReference type="EMBL" id="AE009952">
    <property type="protein sequence ID" value="AAM87050.1"/>
    <property type="status" value="ALT_FRAME"/>
    <property type="molecule type" value="Genomic_DNA"/>
</dbReference>
<dbReference type="EMBL" id="AE009952">
    <property type="protein sequence ID" value="AAM87051.1"/>
    <property type="status" value="ALT_FRAME"/>
    <property type="molecule type" value="Genomic_DNA"/>
</dbReference>
<dbReference type="EMBL" id="AE017042">
    <property type="status" value="NOT_ANNOTATED_CDS"/>
    <property type="molecule type" value="Genomic_DNA"/>
</dbReference>
<dbReference type="DNASU" id="1148449"/>
<dbReference type="KEGG" id="ypk:y3502"/>
<dbReference type="KEGG" id="ypk:y3503"/>
<dbReference type="HOGENOM" id="CLU_018288_1_0_6"/>
<dbReference type="Proteomes" id="UP000000815">
    <property type="component" value="Chromosome"/>
</dbReference>
<dbReference type="Proteomes" id="UP000001019">
    <property type="component" value="Chromosome"/>
</dbReference>
<dbReference type="Proteomes" id="UP000002490">
    <property type="component" value="Chromosome"/>
</dbReference>
<dbReference type="GO" id="GO:0051539">
    <property type="term" value="F:4 iron, 4 sulfur cluster binding"/>
    <property type="evidence" value="ECO:0007669"/>
    <property type="project" value="UniProtKB-KW"/>
</dbReference>
<dbReference type="GO" id="GO:0003824">
    <property type="term" value="F:catalytic activity"/>
    <property type="evidence" value="ECO:0007669"/>
    <property type="project" value="InterPro"/>
</dbReference>
<dbReference type="GO" id="GO:0005506">
    <property type="term" value="F:iron ion binding"/>
    <property type="evidence" value="ECO:0007669"/>
    <property type="project" value="UniProtKB-UniRule"/>
</dbReference>
<dbReference type="Gene3D" id="3.80.30.20">
    <property type="entry name" value="tm_1862 like domain"/>
    <property type="match status" value="1"/>
</dbReference>
<dbReference type="HAMAP" id="MF_01251">
    <property type="entry name" value="UPF0313"/>
    <property type="match status" value="1"/>
</dbReference>
<dbReference type="InterPro" id="IPR006638">
    <property type="entry name" value="Elp3/MiaA/NifB-like_rSAM"/>
</dbReference>
<dbReference type="InterPro" id="IPR020612">
    <property type="entry name" value="Methylthiotransferase_CS"/>
</dbReference>
<dbReference type="InterPro" id="IPR007197">
    <property type="entry name" value="rSAM"/>
</dbReference>
<dbReference type="InterPro" id="IPR023404">
    <property type="entry name" value="rSAM_horseshoe"/>
</dbReference>
<dbReference type="InterPro" id="IPR022946">
    <property type="entry name" value="UPF0313"/>
</dbReference>
<dbReference type="InterPro" id="IPR024560">
    <property type="entry name" value="UPF0313_C"/>
</dbReference>
<dbReference type="InterPro" id="IPR013704">
    <property type="entry name" value="UPF0313_N"/>
</dbReference>
<dbReference type="NCBIfam" id="TIGR03904">
    <property type="entry name" value="SAM_YgiQ"/>
    <property type="match status" value="1"/>
</dbReference>
<dbReference type="PANTHER" id="PTHR32331">
    <property type="entry name" value="UPF0313 PROTEIN YGIQ"/>
    <property type="match status" value="1"/>
</dbReference>
<dbReference type="PANTHER" id="PTHR32331:SF0">
    <property type="entry name" value="UPF0313 PROTEIN YGIQ"/>
    <property type="match status" value="1"/>
</dbReference>
<dbReference type="Pfam" id="PF11842">
    <property type="entry name" value="DUF3362"/>
    <property type="match status" value="1"/>
</dbReference>
<dbReference type="Pfam" id="PF04055">
    <property type="entry name" value="Radical_SAM"/>
    <property type="match status" value="1"/>
</dbReference>
<dbReference type="Pfam" id="PF08497">
    <property type="entry name" value="Radical_SAM_N"/>
    <property type="match status" value="1"/>
</dbReference>
<dbReference type="SFLD" id="SFLDG01082">
    <property type="entry name" value="B12-binding_domain_containing"/>
    <property type="match status" value="1"/>
</dbReference>
<dbReference type="SFLD" id="SFLDS00029">
    <property type="entry name" value="Radical_SAM"/>
    <property type="match status" value="1"/>
</dbReference>
<dbReference type="SFLD" id="SFLDG01069">
    <property type="entry name" value="UPF0313"/>
    <property type="match status" value="1"/>
</dbReference>
<dbReference type="SMART" id="SM00729">
    <property type="entry name" value="Elp3"/>
    <property type="match status" value="1"/>
</dbReference>
<dbReference type="SUPFAM" id="SSF102114">
    <property type="entry name" value="Radical SAM enzymes"/>
    <property type="match status" value="1"/>
</dbReference>
<dbReference type="PROSITE" id="PS51918">
    <property type="entry name" value="RADICAL_SAM"/>
    <property type="match status" value="1"/>
</dbReference>
<protein>
    <recommendedName>
        <fullName>Putative UPF0313 protein YPO0674/y3502/YP_2990</fullName>
    </recommendedName>
</protein>
<accession>Q8CZS4</accession>
<accession>Q8CZS5</accession>
<sequence length="781" mass="87649">MSISLIQPERDLFSYQPYWAECYGTAPFLPMSREEMDILGWDSCDIIVITGDAYVDHPSFGMAIVGRMLEAQGFRVGIIAQPDWTNKHDFMRLGEPNLFFGVTAGNMDSMINRYTADRKLRHDDAYTPDNQSGKRPDRATLVYSQRCKEAYSHVPVLLGGIEASLRRIAHYDYWSDTVRRSVIVDAKADMLVYGNGERPLVEVAHRLAAGEKITDIQDVRNTVVMRKTPLPGWSGVDSTRLDKPGRIEAIPNPYGEDLPCATDDISIPEAKPITVRAAKPKPWEKTYVLLPSYEKVKADKVLYAHTSRILHHETNPGCARALMQKHGDRYIWINPPAIPLSTEEMDSVFALPYQRVPHPSYGKSPIPAYDMIRFSINIMRGCYGGCSFCSITEHEGRIIQSRSEDSIIREIEEIRDKVPGFTGIISDLGGPTANMYMLRCQSPRAEQTCRRASCVYPEICPHMDTNHQPTISLYRRARDLKGIKKILIASGVRYDLAVEDPRYIKELASHHVGGYLKIAPEHTEEGPLSKMMKPGMGSYQRFKELFDTYSKQAGKEQYLIPYFISAHPGTEDKDMVNLALWLKKNRFRLDQVQNFYPSPLANSTTMYYTGKNPLAKVDYKSEEVVVPKGDRQRRLHKALLRYHDPANWPMLRSALEDMGLQHLIGARRECLVPAPTLEEQREARRALRHHTPALTKHTSITRQRQPSNRAPAASAGKKAPTVANGTSSAHSTSANQSTSANQSTSAAHSTLATKKSAGKTGVNKAAVNKPSAGSRGKNRQH</sequence>
<name>Y674_YERPE</name>
<feature type="chain" id="PRO_0000076402" description="Putative UPF0313 protein YPO0674/y3502/YP_2990">
    <location>
        <begin position="1"/>
        <end position="781"/>
    </location>
</feature>
<feature type="domain" description="Radical SAM core" evidence="2">
    <location>
        <begin position="368"/>
        <end position="646"/>
    </location>
</feature>
<feature type="region of interest" description="Disordered" evidence="3">
    <location>
        <begin position="681"/>
        <end position="781"/>
    </location>
</feature>
<feature type="compositionally biased region" description="Polar residues" evidence="3">
    <location>
        <begin position="696"/>
        <end position="708"/>
    </location>
</feature>
<feature type="compositionally biased region" description="Low complexity" evidence="3">
    <location>
        <begin position="726"/>
        <end position="750"/>
    </location>
</feature>
<feature type="binding site" evidence="1">
    <location>
        <position position="382"/>
    </location>
    <ligand>
        <name>[4Fe-4S] cluster</name>
        <dbReference type="ChEBI" id="CHEBI:49883"/>
        <note>4Fe-4S-S-AdoMet</note>
    </ligand>
</feature>
<feature type="binding site" evidence="1">
    <location>
        <position position="386"/>
    </location>
    <ligand>
        <name>[4Fe-4S] cluster</name>
        <dbReference type="ChEBI" id="CHEBI:49883"/>
        <note>4Fe-4S-S-AdoMet</note>
    </ligand>
</feature>
<feature type="binding site" evidence="1">
    <location>
        <position position="389"/>
    </location>
    <ligand>
        <name>[4Fe-4S] cluster</name>
        <dbReference type="ChEBI" id="CHEBI:49883"/>
        <note>4Fe-4S-S-AdoMet</note>
    </ligand>
</feature>
<organism>
    <name type="scientific">Yersinia pestis</name>
    <dbReference type="NCBI Taxonomy" id="632"/>
    <lineage>
        <taxon>Bacteria</taxon>
        <taxon>Pseudomonadati</taxon>
        <taxon>Pseudomonadota</taxon>
        <taxon>Gammaproteobacteria</taxon>
        <taxon>Enterobacterales</taxon>
        <taxon>Yersiniaceae</taxon>
        <taxon>Yersinia</taxon>
    </lineage>
</organism>